<protein>
    <recommendedName>
        <fullName>Staphylococcal secretory antigen ssaA1</fullName>
    </recommendedName>
</protein>
<gene>
    <name type="primary">ssaA1</name>
    <name type="ordered locus">SACOL2581</name>
</gene>
<keyword id="KW-0677">Repeat</keyword>
<keyword id="KW-0964">Secreted</keyword>
<keyword id="KW-0732">Signal</keyword>
<keyword id="KW-0843">Virulence</keyword>
<dbReference type="EMBL" id="CP000046">
    <property type="protein sequence ID" value="AAW38583.1"/>
    <property type="molecule type" value="Genomic_DNA"/>
</dbReference>
<dbReference type="RefSeq" id="WP_000725225.1">
    <property type="nucleotide sequence ID" value="NZ_JBGOFO010000001.1"/>
</dbReference>
<dbReference type="SMR" id="Q5HCY4"/>
<dbReference type="KEGG" id="sac:SACOL2581"/>
<dbReference type="HOGENOM" id="CLU_016043_11_0_9"/>
<dbReference type="Proteomes" id="UP000000530">
    <property type="component" value="Chromosome"/>
</dbReference>
<dbReference type="GO" id="GO:0005576">
    <property type="term" value="C:extracellular region"/>
    <property type="evidence" value="ECO:0007669"/>
    <property type="project" value="UniProtKB-SubCell"/>
</dbReference>
<dbReference type="Gene3D" id="3.90.1720.10">
    <property type="entry name" value="endopeptidase domain like (from Nostoc punctiforme)"/>
    <property type="match status" value="1"/>
</dbReference>
<dbReference type="InterPro" id="IPR007921">
    <property type="entry name" value="CHAP_dom"/>
</dbReference>
<dbReference type="InterPro" id="IPR038765">
    <property type="entry name" value="Papain-like_cys_pep_sf"/>
</dbReference>
<dbReference type="Pfam" id="PF05257">
    <property type="entry name" value="CHAP"/>
    <property type="match status" value="1"/>
</dbReference>
<dbReference type="SUPFAM" id="SSF54001">
    <property type="entry name" value="Cysteine proteinases"/>
    <property type="match status" value="1"/>
</dbReference>
<dbReference type="PROSITE" id="PS50911">
    <property type="entry name" value="CHAP"/>
    <property type="match status" value="1"/>
</dbReference>
<evidence type="ECO:0000250" key="1"/>
<evidence type="ECO:0000255" key="2"/>
<evidence type="ECO:0000255" key="3">
    <source>
        <dbReference type="PROSITE-ProRule" id="PRU00048"/>
    </source>
</evidence>
<comment type="function">
    <text evidence="1">Not known; immunogenic protein.</text>
</comment>
<comment type="subcellular location">
    <subcellularLocation>
        <location evidence="1">Secreted</location>
    </subcellularLocation>
</comment>
<sequence>MKKIVTATIATAGLATIAFAGHDAQAAEQNNNGYNSNDAQSYSYTYTIDAQGNYHYTWTGNWNPSQLTQNNTYYYNNYNTYSYNNASYNNYYNHSYQYNNYTNNSQTATNNYYTGGSGASYSTTSNNVHVTTTAAPSSNGRSISNGYASGSNLYTSGQCTYYVFDRVGGKIGSTWGNASNWANAAASSGYTVNNTPKVGAIMQTTQGYYGHVAYVEGVNSNGSVRVSEMNYGHGAGVVTSRTISANQAGSYNFIH</sequence>
<feature type="signal peptide" evidence="2">
    <location>
        <begin position="1"/>
        <end position="26"/>
    </location>
</feature>
<feature type="chain" id="PRO_0000045308" description="Staphylococcal secretory antigen ssaA1">
    <location>
        <begin position="27"/>
        <end position="255"/>
    </location>
</feature>
<feature type="repeat" description="1">
    <location>
        <begin position="75"/>
        <end position="78"/>
    </location>
</feature>
<feature type="repeat" description="2">
    <location>
        <begin position="88"/>
        <end position="91"/>
    </location>
</feature>
<feature type="repeat" description="3">
    <location>
        <begin position="98"/>
        <end position="101"/>
    </location>
</feature>
<feature type="domain" description="Peptidase C51" evidence="3">
    <location>
        <begin position="134"/>
        <end position="255"/>
    </location>
</feature>
<feature type="region of interest" description="3 X 4 AA repeats of Y-N-N-Y">
    <location>
        <begin position="75"/>
        <end position="101"/>
    </location>
</feature>
<reference key="1">
    <citation type="journal article" date="2005" name="J. Bacteriol.">
        <title>Insights on evolution of virulence and resistance from the complete genome analysis of an early methicillin-resistant Staphylococcus aureus strain and a biofilm-producing methicillin-resistant Staphylococcus epidermidis strain.</title>
        <authorList>
            <person name="Gill S.R."/>
            <person name="Fouts D.E."/>
            <person name="Archer G.L."/>
            <person name="Mongodin E.F."/>
            <person name="DeBoy R.T."/>
            <person name="Ravel J."/>
            <person name="Paulsen I.T."/>
            <person name="Kolonay J.F."/>
            <person name="Brinkac L.M."/>
            <person name="Beanan M.J."/>
            <person name="Dodson R.J."/>
            <person name="Daugherty S.C."/>
            <person name="Madupu R."/>
            <person name="Angiuoli S.V."/>
            <person name="Durkin A.S."/>
            <person name="Haft D.H."/>
            <person name="Vamathevan J.J."/>
            <person name="Khouri H."/>
            <person name="Utterback T.R."/>
            <person name="Lee C."/>
            <person name="Dimitrov G."/>
            <person name="Jiang L."/>
            <person name="Qin H."/>
            <person name="Weidman J."/>
            <person name="Tran K."/>
            <person name="Kang K.H."/>
            <person name="Hance I.R."/>
            <person name="Nelson K.E."/>
            <person name="Fraser C.M."/>
        </authorList>
    </citation>
    <scope>NUCLEOTIDE SEQUENCE [LARGE SCALE GENOMIC DNA]</scope>
    <source>
        <strain>COL</strain>
    </source>
</reference>
<accession>Q5HCY4</accession>
<proteinExistence type="inferred from homology"/>
<name>SSAA1_STAAC</name>
<organism>
    <name type="scientific">Staphylococcus aureus (strain COL)</name>
    <dbReference type="NCBI Taxonomy" id="93062"/>
    <lineage>
        <taxon>Bacteria</taxon>
        <taxon>Bacillati</taxon>
        <taxon>Bacillota</taxon>
        <taxon>Bacilli</taxon>
        <taxon>Bacillales</taxon>
        <taxon>Staphylococcaceae</taxon>
        <taxon>Staphylococcus</taxon>
    </lineage>
</organism>